<sequence length="742" mass="83748">MKIDSNGIVNPHSITNEIPSYDEKQAVDLNGNAFAPNGTFQKKDLISHKNDFERTMRHDVLHTNPKIEVRSETHIYEPNDSLFKENQDFPSNPTAHSPSSSSNDSVITATGVPDGILRDSPIVSALEPPSSNSSSSPQLQNLKHQLSSPQPSRAPIDRSSSNPVTSSQQPPNDRSTLSSSQKAKRPLKRSYSEKNSSNAEPSGSRSGDRGTNVSTSGSLLDGIPPDIGSASWAEAVKQKRVNMRRRREELDDECVLVGTRVSEGHENYVTAYNMLTGIRVGVSRCQAKMDRELTPADFTARHKFTFDITGNELTPSAKYDFKFKDYAPWVFRHLRQLFHLDAADYLVSLTSKYILSELDSPGKSGSFFYFSRDYRFIIKTIHHSEHKFLREILYDYYEHVKNNPNTLISQFYGLHRVKLPFGRKIHFVVMNNLFPPHRDIHQTFDLKGSTLGRELDENQPCQSPMCTMKDTNWIRRNMHLQFGPLKRQIFLTQVKADIDMLSSLGIMDYSLLVGIHDLSRGNRDKIRNSILSVYDPNVSQHRVPSINGNESHSNVHVIRQVVNSTGPVSLDQSCNLLPTDQFVERRNFMFYSDDGGFQATDENNEPGNFIFYIGIIDLLTKYSYVKRVEHLWKGINHSDSVISAVPPAEYASRFYKFVESSIKPTLLVLKPFPLKPQDGQRVNKQQSVNAGNVRTNNKHGSLNNNTAPSSRNAKSTSAHKSPKTEHRFPFPCRNVTTNTSSS</sequence>
<accession>O13853</accession>
<protein>
    <recommendedName>
        <fullName>Phosphatidylinositol 4-phosphate 5-kinase its3</fullName>
        <ecNumber evidence="7">2.7.1.68</ecNumber>
    </recommendedName>
    <alternativeName>
        <fullName>1-phosphatidylinositol 4-phosphate kinase</fullName>
    </alternativeName>
    <alternativeName>
        <fullName>Diphosphoinositide kinase</fullName>
    </alternativeName>
    <alternativeName>
        <fullName>PIP5K</fullName>
    </alternativeName>
    <alternativeName>
        <fullName>PtdIns(4)P-5-kinase</fullName>
    </alternativeName>
</protein>
<gene>
    <name type="primary">its3</name>
    <name type="ORF">SPAC19G12.14</name>
</gene>
<feature type="chain" id="PRO_0000185484" description="Phosphatidylinositol 4-phosphate 5-kinase its3">
    <location>
        <begin position="1"/>
        <end position="742"/>
    </location>
</feature>
<feature type="domain" description="PIPK" evidence="1">
    <location>
        <begin position="264"/>
        <end position="662"/>
    </location>
</feature>
<feature type="region of interest" description="Disordered" evidence="2">
    <location>
        <begin position="1"/>
        <end position="21"/>
    </location>
</feature>
<feature type="region of interest" description="Disordered" evidence="2">
    <location>
        <begin position="82"/>
        <end position="228"/>
    </location>
</feature>
<feature type="region of interest" description="Disordered" evidence="2">
    <location>
        <begin position="677"/>
        <end position="742"/>
    </location>
</feature>
<feature type="compositionally biased region" description="Low complexity" evidence="2">
    <location>
        <begin position="90"/>
        <end position="105"/>
    </location>
</feature>
<feature type="compositionally biased region" description="Low complexity" evidence="2">
    <location>
        <begin position="129"/>
        <end position="142"/>
    </location>
</feature>
<feature type="compositionally biased region" description="Polar residues" evidence="2">
    <location>
        <begin position="158"/>
        <end position="181"/>
    </location>
</feature>
<feature type="compositionally biased region" description="Polar residues" evidence="2">
    <location>
        <begin position="193"/>
        <end position="218"/>
    </location>
</feature>
<feature type="compositionally biased region" description="Polar residues" evidence="2">
    <location>
        <begin position="680"/>
        <end position="719"/>
    </location>
</feature>
<dbReference type="EC" id="2.7.1.68" evidence="7"/>
<dbReference type="EMBL" id="CU329670">
    <property type="protein sequence ID" value="CAB10125.1"/>
    <property type="molecule type" value="Genomic_DNA"/>
</dbReference>
<dbReference type="EMBL" id="AB027961">
    <property type="protein sequence ID" value="BAA87265.1"/>
    <property type="molecule type" value="Genomic_DNA"/>
</dbReference>
<dbReference type="PIR" id="T38001">
    <property type="entry name" value="T38001"/>
</dbReference>
<dbReference type="RefSeq" id="NP_594429.1">
    <property type="nucleotide sequence ID" value="NM_001019858.2"/>
</dbReference>
<dbReference type="SMR" id="O13853"/>
<dbReference type="BioGRID" id="278704">
    <property type="interactions" value="20"/>
</dbReference>
<dbReference type="FunCoup" id="O13853">
    <property type="interactions" value="417"/>
</dbReference>
<dbReference type="STRING" id="284812.O13853"/>
<dbReference type="iPTMnet" id="O13853"/>
<dbReference type="PaxDb" id="4896-SPAC19G12.14.1"/>
<dbReference type="EnsemblFungi" id="SPAC19G12.14.1">
    <property type="protein sequence ID" value="SPAC19G12.14.1:pep"/>
    <property type="gene ID" value="SPAC19G12.14"/>
</dbReference>
<dbReference type="GeneID" id="2542231"/>
<dbReference type="KEGG" id="spo:2542231"/>
<dbReference type="PomBase" id="SPAC19G12.14">
    <property type="gene designation" value="its3"/>
</dbReference>
<dbReference type="VEuPathDB" id="FungiDB:SPAC19G12.14"/>
<dbReference type="eggNOG" id="KOG0229">
    <property type="taxonomic scope" value="Eukaryota"/>
</dbReference>
<dbReference type="HOGENOM" id="CLU_004312_6_1_1"/>
<dbReference type="InParanoid" id="O13853"/>
<dbReference type="PhylomeDB" id="O13853"/>
<dbReference type="Reactome" id="R-SPO-1660499">
    <property type="pathway name" value="Synthesis of PIPs at the plasma membrane"/>
</dbReference>
<dbReference type="Reactome" id="R-SPO-6811555">
    <property type="pathway name" value="PI5P Regulates TP53 Acetylation"/>
</dbReference>
<dbReference type="Reactome" id="R-SPO-6811558">
    <property type="pathway name" value="PI5P, PP2A and IER3 Regulate PI3K/AKT Signaling"/>
</dbReference>
<dbReference type="Reactome" id="R-SPO-8847453">
    <property type="pathway name" value="Synthesis of PIPs in the nucleus"/>
</dbReference>
<dbReference type="Reactome" id="R-SPO-8856828">
    <property type="pathway name" value="Clathrin-mediated endocytosis"/>
</dbReference>
<dbReference type="PRO" id="PR:O13853"/>
<dbReference type="Proteomes" id="UP000002485">
    <property type="component" value="Chromosome I"/>
</dbReference>
<dbReference type="GO" id="GO:0032153">
    <property type="term" value="C:cell division site"/>
    <property type="evidence" value="ECO:0000314"/>
    <property type="project" value="PomBase"/>
</dbReference>
<dbReference type="GO" id="GO:0005886">
    <property type="term" value="C:plasma membrane"/>
    <property type="evidence" value="ECO:0000314"/>
    <property type="project" value="PomBase"/>
</dbReference>
<dbReference type="GO" id="GO:0052811">
    <property type="term" value="F:1-phosphatidylinositol-3-phosphate 4-kinase activity"/>
    <property type="evidence" value="ECO:0000315"/>
    <property type="project" value="PomBase"/>
</dbReference>
<dbReference type="GO" id="GO:0016308">
    <property type="term" value="F:1-phosphatidylinositol-4-phosphate 5-kinase activity"/>
    <property type="evidence" value="ECO:0000315"/>
    <property type="project" value="PomBase"/>
</dbReference>
<dbReference type="GO" id="GO:0005524">
    <property type="term" value="F:ATP binding"/>
    <property type="evidence" value="ECO:0007669"/>
    <property type="project" value="UniProtKB-KW"/>
</dbReference>
<dbReference type="GO" id="GO:0005543">
    <property type="term" value="F:phospholipid binding"/>
    <property type="evidence" value="ECO:0000314"/>
    <property type="project" value="PomBase"/>
</dbReference>
<dbReference type="GO" id="GO:1902635">
    <property type="term" value="P:1-phosphatidyl-1D-myo-inositol 4,5-bisphosphate biosynthetic process"/>
    <property type="evidence" value="ECO:0000315"/>
    <property type="project" value="PomBase"/>
</dbReference>
<dbReference type="GO" id="GO:0051301">
    <property type="term" value="P:cell division"/>
    <property type="evidence" value="ECO:0007669"/>
    <property type="project" value="UniProtKB-KW"/>
</dbReference>
<dbReference type="GO" id="GO:0030989">
    <property type="term" value="P:dynein-driven meiotic oscillatory nuclear movement"/>
    <property type="evidence" value="ECO:0000269"/>
    <property type="project" value="PomBase"/>
</dbReference>
<dbReference type="GO" id="GO:0046854">
    <property type="term" value="P:phosphatidylinositol phosphate biosynthetic process"/>
    <property type="evidence" value="ECO:0000315"/>
    <property type="project" value="PomBase"/>
</dbReference>
<dbReference type="GO" id="GO:1902412">
    <property type="term" value="P:regulation of mitotic cytokinesis"/>
    <property type="evidence" value="ECO:0000315"/>
    <property type="project" value="PomBase"/>
</dbReference>
<dbReference type="CDD" id="cd17303">
    <property type="entry name" value="PIPKc_PIP5K_yeast_like"/>
    <property type="match status" value="1"/>
</dbReference>
<dbReference type="FunFam" id="3.30.800.10:FF:000009">
    <property type="entry name" value="Phosphatidylinositol 4-phosphate 5-kinase its3"/>
    <property type="match status" value="1"/>
</dbReference>
<dbReference type="Gene3D" id="3.30.810.10">
    <property type="entry name" value="2-Layer Sandwich"/>
    <property type="match status" value="1"/>
</dbReference>
<dbReference type="Gene3D" id="3.30.800.10">
    <property type="entry name" value="Phosphatidylinositol Phosphate Kinase II Beta"/>
    <property type="match status" value="1"/>
</dbReference>
<dbReference type="InterPro" id="IPR027483">
    <property type="entry name" value="PInositol-4-P-4/5-kinase_C_sf"/>
</dbReference>
<dbReference type="InterPro" id="IPR002498">
    <property type="entry name" value="PInositol-4-P-4/5-kinase_core"/>
</dbReference>
<dbReference type="InterPro" id="IPR027484">
    <property type="entry name" value="PInositol-4-P-5-kinase_N"/>
</dbReference>
<dbReference type="InterPro" id="IPR023610">
    <property type="entry name" value="PInositol-4/5-P-5/4-kinase"/>
</dbReference>
<dbReference type="PANTHER" id="PTHR23086:SF8">
    <property type="entry name" value="PHOSPHATIDYLINOSITOL 5-PHOSPHATE 4-KINASE, ISOFORM A"/>
    <property type="match status" value="1"/>
</dbReference>
<dbReference type="PANTHER" id="PTHR23086">
    <property type="entry name" value="PHOSPHATIDYLINOSITOL-4-PHOSPHATE 5-KINASE"/>
    <property type="match status" value="1"/>
</dbReference>
<dbReference type="Pfam" id="PF01504">
    <property type="entry name" value="PIP5K"/>
    <property type="match status" value="1"/>
</dbReference>
<dbReference type="SMART" id="SM00330">
    <property type="entry name" value="PIPKc"/>
    <property type="match status" value="1"/>
</dbReference>
<dbReference type="SUPFAM" id="SSF56104">
    <property type="entry name" value="SAICAR synthase-like"/>
    <property type="match status" value="1"/>
</dbReference>
<dbReference type="PROSITE" id="PS51455">
    <property type="entry name" value="PIPK"/>
    <property type="match status" value="1"/>
</dbReference>
<organism>
    <name type="scientific">Schizosaccharomyces pombe (strain 972 / ATCC 24843)</name>
    <name type="common">Fission yeast</name>
    <dbReference type="NCBI Taxonomy" id="284812"/>
    <lineage>
        <taxon>Eukaryota</taxon>
        <taxon>Fungi</taxon>
        <taxon>Dikarya</taxon>
        <taxon>Ascomycota</taxon>
        <taxon>Taphrinomycotina</taxon>
        <taxon>Schizosaccharomycetes</taxon>
        <taxon>Schizosaccharomycetales</taxon>
        <taxon>Schizosaccharomycetaceae</taxon>
        <taxon>Schizosaccharomyces</taxon>
    </lineage>
</organism>
<comment type="function">
    <text evidence="3">Catalyzes the phosphorylation of phosphatidylinositol 4-phosphate on the fifth hydroxyl of the myo-inositol ring, to form phosphatidylinositol 4,5-bisphosphate (PubMed:10950958). Involved, together with the calcineurin ppb1, in cytokinesis (PubMed:10950958).</text>
</comment>
<comment type="catalytic activity">
    <reaction evidence="7">
        <text>a 1,2-diacyl-sn-glycero-3-phospho-(1D-myo-inositol 4-phosphate) + ATP = a 1,2-diacyl-sn-glycero-3-phospho-(1D-myo-inositol-4,5-bisphosphate) + ADP + H(+)</text>
        <dbReference type="Rhea" id="RHEA:14425"/>
        <dbReference type="ChEBI" id="CHEBI:15378"/>
        <dbReference type="ChEBI" id="CHEBI:30616"/>
        <dbReference type="ChEBI" id="CHEBI:58178"/>
        <dbReference type="ChEBI" id="CHEBI:58456"/>
        <dbReference type="ChEBI" id="CHEBI:456216"/>
        <dbReference type="EC" id="2.7.1.68"/>
    </reaction>
</comment>
<comment type="subunit">
    <text evidence="4">Interacts with opy1 (via domain PH 1); the interaction is direct but opy1 does not appear to regulate its3 localization or function.</text>
</comment>
<comment type="subcellular location">
    <subcellularLocation>
        <location evidence="3 4 5 6">Cell membrane</location>
        <topology evidence="6">Peripheral membrane protein</topology>
    </subcellularLocation>
    <text evidence="4 5 6">Also localizes to the cell division site.</text>
</comment>
<comment type="PTM">
    <text evidence="6">Phosphorylated by casein kinase I. Phosphorylation inactivates the enzyme.</text>
</comment>
<keyword id="KW-0067">ATP-binding</keyword>
<keyword id="KW-0131">Cell cycle</keyword>
<keyword id="KW-0132">Cell division</keyword>
<keyword id="KW-1003">Cell membrane</keyword>
<keyword id="KW-0418">Kinase</keyword>
<keyword id="KW-0472">Membrane</keyword>
<keyword id="KW-0547">Nucleotide-binding</keyword>
<keyword id="KW-0597">Phosphoprotein</keyword>
<keyword id="KW-1185">Reference proteome</keyword>
<keyword id="KW-0808">Transferase</keyword>
<name>ITS3_SCHPO</name>
<proteinExistence type="evidence at protein level"/>
<reference key="1">
    <citation type="journal article" date="2000" name="J. Biol. Chem.">
        <title>Phosphatidylinositol 4-phosphate 5-kinase Its3 and calcineurin Ppb1 coordinately regulate cytokinesis in fission yeast.</title>
        <authorList>
            <person name="Zhang Y."/>
            <person name="Sugiura R."/>
            <person name="Lu Y."/>
            <person name="Asami M."/>
            <person name="Maeda T."/>
            <person name="Itoh T."/>
            <person name="Takenawa T."/>
            <person name="Shuntoh H."/>
            <person name="Kuno T."/>
        </authorList>
    </citation>
    <scope>NUCLEOTIDE SEQUENCE [GENOMIC DNA]</scope>
    <scope>FUNCTION</scope>
    <scope>CATALYTIC ACTIVITY</scope>
    <scope>SUBCELLULAR LOCATION</scope>
</reference>
<reference key="2">
    <citation type="journal article" date="2002" name="Nature">
        <title>The genome sequence of Schizosaccharomyces pombe.</title>
        <authorList>
            <person name="Wood V."/>
            <person name="Gwilliam R."/>
            <person name="Rajandream M.A."/>
            <person name="Lyne M.H."/>
            <person name="Lyne R."/>
            <person name="Stewart A."/>
            <person name="Sgouros J.G."/>
            <person name="Peat N."/>
            <person name="Hayles J."/>
            <person name="Baker S.G."/>
            <person name="Basham D."/>
            <person name="Bowman S."/>
            <person name="Brooks K."/>
            <person name="Brown D."/>
            <person name="Brown S."/>
            <person name="Chillingworth T."/>
            <person name="Churcher C.M."/>
            <person name="Collins M."/>
            <person name="Connor R."/>
            <person name="Cronin A."/>
            <person name="Davis P."/>
            <person name="Feltwell T."/>
            <person name="Fraser A."/>
            <person name="Gentles S."/>
            <person name="Goble A."/>
            <person name="Hamlin N."/>
            <person name="Harris D.E."/>
            <person name="Hidalgo J."/>
            <person name="Hodgson G."/>
            <person name="Holroyd S."/>
            <person name="Hornsby T."/>
            <person name="Howarth S."/>
            <person name="Huckle E.J."/>
            <person name="Hunt S."/>
            <person name="Jagels K."/>
            <person name="James K.D."/>
            <person name="Jones L."/>
            <person name="Jones M."/>
            <person name="Leather S."/>
            <person name="McDonald S."/>
            <person name="McLean J."/>
            <person name="Mooney P."/>
            <person name="Moule S."/>
            <person name="Mungall K.L."/>
            <person name="Murphy L.D."/>
            <person name="Niblett D."/>
            <person name="Odell C."/>
            <person name="Oliver K."/>
            <person name="O'Neil S."/>
            <person name="Pearson D."/>
            <person name="Quail M.A."/>
            <person name="Rabbinowitsch E."/>
            <person name="Rutherford K.M."/>
            <person name="Rutter S."/>
            <person name="Saunders D."/>
            <person name="Seeger K."/>
            <person name="Sharp S."/>
            <person name="Skelton J."/>
            <person name="Simmonds M.N."/>
            <person name="Squares R."/>
            <person name="Squares S."/>
            <person name="Stevens K."/>
            <person name="Taylor K."/>
            <person name="Taylor R.G."/>
            <person name="Tivey A."/>
            <person name="Walsh S.V."/>
            <person name="Warren T."/>
            <person name="Whitehead S."/>
            <person name="Woodward J.R."/>
            <person name="Volckaert G."/>
            <person name="Aert R."/>
            <person name="Robben J."/>
            <person name="Grymonprez B."/>
            <person name="Weltjens I."/>
            <person name="Vanstreels E."/>
            <person name="Rieger M."/>
            <person name="Schaefer M."/>
            <person name="Mueller-Auer S."/>
            <person name="Gabel C."/>
            <person name="Fuchs M."/>
            <person name="Duesterhoeft A."/>
            <person name="Fritzc C."/>
            <person name="Holzer E."/>
            <person name="Moestl D."/>
            <person name="Hilbert H."/>
            <person name="Borzym K."/>
            <person name="Langer I."/>
            <person name="Beck A."/>
            <person name="Lehrach H."/>
            <person name="Reinhardt R."/>
            <person name="Pohl T.M."/>
            <person name="Eger P."/>
            <person name="Zimmermann W."/>
            <person name="Wedler H."/>
            <person name="Wambutt R."/>
            <person name="Purnelle B."/>
            <person name="Goffeau A."/>
            <person name="Cadieu E."/>
            <person name="Dreano S."/>
            <person name="Gloux S."/>
            <person name="Lelaure V."/>
            <person name="Mottier S."/>
            <person name="Galibert F."/>
            <person name="Aves S.J."/>
            <person name="Xiang Z."/>
            <person name="Hunt C."/>
            <person name="Moore K."/>
            <person name="Hurst S.M."/>
            <person name="Lucas M."/>
            <person name="Rochet M."/>
            <person name="Gaillardin C."/>
            <person name="Tallada V.A."/>
            <person name="Garzon A."/>
            <person name="Thode G."/>
            <person name="Daga R.R."/>
            <person name="Cruzado L."/>
            <person name="Jimenez J."/>
            <person name="Sanchez M."/>
            <person name="del Rey F."/>
            <person name="Benito J."/>
            <person name="Dominguez A."/>
            <person name="Revuelta J.L."/>
            <person name="Moreno S."/>
            <person name="Armstrong J."/>
            <person name="Forsburg S.L."/>
            <person name="Cerutti L."/>
            <person name="Lowe T."/>
            <person name="McCombie W.R."/>
            <person name="Paulsen I."/>
            <person name="Potashkin J."/>
            <person name="Shpakovski G.V."/>
            <person name="Ussery D."/>
            <person name="Barrell B.G."/>
            <person name="Nurse P."/>
        </authorList>
    </citation>
    <scope>NUCLEOTIDE SEQUENCE [LARGE SCALE GENOMIC DNA]</scope>
    <source>
        <strain>972 / ATCC 24843</strain>
    </source>
</reference>
<reference key="3">
    <citation type="journal article" date="2000" name="Genes Cells">
        <title>Large-scale screening of intracellular protein localization in living fission yeast cells by the use of a GFP-fusion genomic DNA library.</title>
        <authorList>
            <person name="Ding D.-Q."/>
            <person name="Tomita Y."/>
            <person name="Yamamoto A."/>
            <person name="Chikashige Y."/>
            <person name="Haraguchi T."/>
            <person name="Hiraoka Y."/>
        </authorList>
    </citation>
    <scope>NUCLEOTIDE SEQUENCE [LARGE SCALE GENOMIC DNA] OF 238-445</scope>
    <source>
        <strain>ATCC 38364 / 968</strain>
    </source>
</reference>
<reference key="4">
    <citation type="journal article" date="1999" name="J. Biol. Chem.">
        <title>Regulation of phosphatidylinositol 4-phosphate 5-kinase from Schizosaccharomyces pombe by casein kinase I.</title>
        <authorList>
            <person name="Vancurova I."/>
            <person name="Choi J.H."/>
            <person name="Lin H."/>
            <person name="Kuret J."/>
            <person name="Vancura A."/>
        </authorList>
    </citation>
    <scope>SUBCELLULAR LOCATION</scope>
    <scope>PHOSPHORYLATION</scope>
</reference>
<reference key="5">
    <citation type="journal article" date="2020" name="J. Cell Sci.">
        <title>Fission yeast Opy1 is an endogenous PI(4,5)P2 sensor that binds to the phosphatidylinositol 4-phosphate 5-kinase Its3.</title>
        <authorList>
            <person name="Snider C.E."/>
            <person name="Willet A.H."/>
            <person name="Brown H.T."/>
            <person name="Chen J.S."/>
            <person name="Evers J.M."/>
            <person name="Gould K.L."/>
        </authorList>
    </citation>
    <scope>INTERACTION WITH OPY1</scope>
    <scope>SUBCELLULAR LOCATION</scope>
</reference>
<reference key="6">
    <citation type="journal article" date="2024" name="J. Cell Sci.">
        <title>Fission yeast Duc1 links to ER-PM contact sites and influences PM lipid composition and cytokinetic ring anchoring.</title>
        <authorList>
            <person name="Willet A.H."/>
            <person name="Park J.S."/>
            <person name="Snider C.E."/>
            <person name="Huang J.J."/>
            <person name="Chen J.S."/>
            <person name="Gould K.L."/>
        </authorList>
    </citation>
    <scope>SUBCELLULAR LOCATION</scope>
</reference>
<evidence type="ECO:0000255" key="1">
    <source>
        <dbReference type="PROSITE-ProRule" id="PRU00781"/>
    </source>
</evidence>
<evidence type="ECO:0000256" key="2">
    <source>
        <dbReference type="SAM" id="MobiDB-lite"/>
    </source>
</evidence>
<evidence type="ECO:0000269" key="3">
    <source>
    </source>
</evidence>
<evidence type="ECO:0000269" key="4">
    <source>
    </source>
</evidence>
<evidence type="ECO:0000269" key="5">
    <source>
    </source>
</evidence>
<evidence type="ECO:0000269" key="6">
    <source>
    </source>
</evidence>
<evidence type="ECO:0000305" key="7">
    <source>
    </source>
</evidence>